<sequence>MVIKAQSPAGFAEEYIIESIWNNRFPPGTILPAERELSELIGVTRTTLREVLQRLARDGWLTIQHGKPTKVNNFWETSGLNILETLARLDHESVPQLIDNLLSVRTNISTIFIRTALRQHPDKAQEVLATAHEVADHADAFADLDYNIFRGLAFASGNPIYGLILNGMKGLYTRIGRHYFANPEARSLALGFYHKLSSLCEQGAHDQVYETVRRYGHDSGEIWHRMQKNLPGDLAIQGR</sequence>
<dbReference type="EMBL" id="CP001113">
    <property type="protein sequence ID" value="ACF63827.1"/>
    <property type="molecule type" value="Genomic_DNA"/>
</dbReference>
<dbReference type="RefSeq" id="WP_000234826.1">
    <property type="nucleotide sequence ID" value="NZ_CCMR01000003.1"/>
</dbReference>
<dbReference type="SMR" id="B4SUJ7"/>
<dbReference type="KEGG" id="see:SNSL254_A1943"/>
<dbReference type="HOGENOM" id="CLU_017584_9_4_6"/>
<dbReference type="Proteomes" id="UP000008824">
    <property type="component" value="Chromosome"/>
</dbReference>
<dbReference type="GO" id="GO:0005737">
    <property type="term" value="C:cytoplasm"/>
    <property type="evidence" value="ECO:0007669"/>
    <property type="project" value="UniProtKB-SubCell"/>
</dbReference>
<dbReference type="GO" id="GO:0003677">
    <property type="term" value="F:DNA binding"/>
    <property type="evidence" value="ECO:0007669"/>
    <property type="project" value="UniProtKB-KW"/>
</dbReference>
<dbReference type="GO" id="GO:0003700">
    <property type="term" value="F:DNA-binding transcription factor activity"/>
    <property type="evidence" value="ECO:0007669"/>
    <property type="project" value="UniProtKB-UniRule"/>
</dbReference>
<dbReference type="GO" id="GO:0000062">
    <property type="term" value="F:fatty-acyl-CoA binding"/>
    <property type="evidence" value="ECO:0007669"/>
    <property type="project" value="InterPro"/>
</dbReference>
<dbReference type="GO" id="GO:0006631">
    <property type="term" value="P:fatty acid metabolic process"/>
    <property type="evidence" value="ECO:0007669"/>
    <property type="project" value="UniProtKB-KW"/>
</dbReference>
<dbReference type="GO" id="GO:0019217">
    <property type="term" value="P:regulation of fatty acid metabolic process"/>
    <property type="evidence" value="ECO:0007669"/>
    <property type="project" value="UniProtKB-UniRule"/>
</dbReference>
<dbReference type="CDD" id="cd07377">
    <property type="entry name" value="WHTH_GntR"/>
    <property type="match status" value="1"/>
</dbReference>
<dbReference type="FunFam" id="1.10.10.10:FF:000036">
    <property type="entry name" value="Fatty acid metabolism regulator protein"/>
    <property type="match status" value="1"/>
</dbReference>
<dbReference type="FunFam" id="1.20.120.530:FF:000003">
    <property type="entry name" value="Fatty acid metabolism regulator protein"/>
    <property type="match status" value="1"/>
</dbReference>
<dbReference type="Gene3D" id="1.20.120.530">
    <property type="entry name" value="GntR ligand-binding domain-like"/>
    <property type="match status" value="1"/>
</dbReference>
<dbReference type="Gene3D" id="1.10.10.10">
    <property type="entry name" value="Winged helix-like DNA-binding domain superfamily/Winged helix DNA-binding domain"/>
    <property type="match status" value="1"/>
</dbReference>
<dbReference type="HAMAP" id="MF_00696">
    <property type="entry name" value="HTH_FadR"/>
    <property type="match status" value="1"/>
</dbReference>
<dbReference type="InterPro" id="IPR014178">
    <property type="entry name" value="FA-response_TF_FadR"/>
</dbReference>
<dbReference type="InterPro" id="IPR028374">
    <property type="entry name" value="FadR_C"/>
</dbReference>
<dbReference type="InterPro" id="IPR008920">
    <property type="entry name" value="TF_FadR/GntR_C"/>
</dbReference>
<dbReference type="InterPro" id="IPR000524">
    <property type="entry name" value="Tscrpt_reg_HTH_GntR"/>
</dbReference>
<dbReference type="InterPro" id="IPR036388">
    <property type="entry name" value="WH-like_DNA-bd_sf"/>
</dbReference>
<dbReference type="InterPro" id="IPR036390">
    <property type="entry name" value="WH_DNA-bd_sf"/>
</dbReference>
<dbReference type="NCBIfam" id="TIGR02812">
    <property type="entry name" value="fadR_gamma"/>
    <property type="match status" value="1"/>
</dbReference>
<dbReference type="NCBIfam" id="NF003444">
    <property type="entry name" value="PRK04984.1"/>
    <property type="match status" value="1"/>
</dbReference>
<dbReference type="PANTHER" id="PTHR43537:SF52">
    <property type="entry name" value="FATTY ACID METABOLISM REGULATOR PROTEIN"/>
    <property type="match status" value="1"/>
</dbReference>
<dbReference type="PANTHER" id="PTHR43537">
    <property type="entry name" value="TRANSCRIPTIONAL REGULATOR, GNTR FAMILY"/>
    <property type="match status" value="1"/>
</dbReference>
<dbReference type="Pfam" id="PF07840">
    <property type="entry name" value="FadR_C"/>
    <property type="match status" value="1"/>
</dbReference>
<dbReference type="Pfam" id="PF00392">
    <property type="entry name" value="GntR"/>
    <property type="match status" value="1"/>
</dbReference>
<dbReference type="PRINTS" id="PR00035">
    <property type="entry name" value="HTHGNTR"/>
</dbReference>
<dbReference type="SMART" id="SM00345">
    <property type="entry name" value="HTH_GNTR"/>
    <property type="match status" value="1"/>
</dbReference>
<dbReference type="SUPFAM" id="SSF48008">
    <property type="entry name" value="GntR ligand-binding domain-like"/>
    <property type="match status" value="1"/>
</dbReference>
<dbReference type="SUPFAM" id="SSF46785">
    <property type="entry name" value="Winged helix' DNA-binding domain"/>
    <property type="match status" value="1"/>
</dbReference>
<dbReference type="PROSITE" id="PS50949">
    <property type="entry name" value="HTH_GNTR"/>
    <property type="match status" value="1"/>
</dbReference>
<proteinExistence type="inferred from homology"/>
<reference key="1">
    <citation type="journal article" date="2011" name="J. Bacteriol.">
        <title>Comparative genomics of 28 Salmonella enterica isolates: evidence for CRISPR-mediated adaptive sublineage evolution.</title>
        <authorList>
            <person name="Fricke W.F."/>
            <person name="Mammel M.K."/>
            <person name="McDermott P.F."/>
            <person name="Tartera C."/>
            <person name="White D.G."/>
            <person name="Leclerc J.E."/>
            <person name="Ravel J."/>
            <person name="Cebula T.A."/>
        </authorList>
    </citation>
    <scope>NUCLEOTIDE SEQUENCE [LARGE SCALE GENOMIC DNA]</scope>
    <source>
        <strain>SL254</strain>
    </source>
</reference>
<feature type="chain" id="PRO_1000132329" description="Fatty acid metabolism regulator protein">
    <location>
        <begin position="1"/>
        <end position="239"/>
    </location>
</feature>
<feature type="domain" description="HTH gntR-type" evidence="1">
    <location>
        <begin position="6"/>
        <end position="74"/>
    </location>
</feature>
<feature type="DNA-binding region" description="H-T-H motif" evidence="1">
    <location>
        <begin position="34"/>
        <end position="53"/>
    </location>
</feature>
<evidence type="ECO:0000255" key="1">
    <source>
        <dbReference type="HAMAP-Rule" id="MF_00696"/>
    </source>
</evidence>
<comment type="function">
    <text evidence="1">Multifunctional regulator of fatty acid metabolism.</text>
</comment>
<comment type="subunit">
    <text evidence="1">Homodimer.</text>
</comment>
<comment type="subcellular location">
    <subcellularLocation>
        <location evidence="1">Cytoplasm</location>
    </subcellularLocation>
</comment>
<accession>B4SUJ7</accession>
<keyword id="KW-0010">Activator</keyword>
<keyword id="KW-0963">Cytoplasm</keyword>
<keyword id="KW-0238">DNA-binding</keyword>
<keyword id="KW-0276">Fatty acid metabolism</keyword>
<keyword id="KW-0443">Lipid metabolism</keyword>
<keyword id="KW-0678">Repressor</keyword>
<keyword id="KW-0804">Transcription</keyword>
<keyword id="KW-0805">Transcription regulation</keyword>
<name>FADR_SALNS</name>
<gene>
    <name evidence="1" type="primary">fadR</name>
    <name type="ordered locus">SNSL254_A1943</name>
</gene>
<protein>
    <recommendedName>
        <fullName evidence="1">Fatty acid metabolism regulator protein</fullName>
    </recommendedName>
</protein>
<organism>
    <name type="scientific">Salmonella newport (strain SL254)</name>
    <dbReference type="NCBI Taxonomy" id="423368"/>
    <lineage>
        <taxon>Bacteria</taxon>
        <taxon>Pseudomonadati</taxon>
        <taxon>Pseudomonadota</taxon>
        <taxon>Gammaproteobacteria</taxon>
        <taxon>Enterobacterales</taxon>
        <taxon>Enterobacteriaceae</taxon>
        <taxon>Salmonella</taxon>
    </lineage>
</organism>